<feature type="chain" id="PRO_0000292147" description="Probable lipid kinase YegS-like">
    <location>
        <begin position="1"/>
        <end position="302"/>
    </location>
</feature>
<feature type="domain" description="DAGKc" evidence="1">
    <location>
        <begin position="1"/>
        <end position="129"/>
    </location>
</feature>
<feature type="active site" description="Proton acceptor" evidence="1">
    <location>
        <position position="268"/>
    </location>
</feature>
<feature type="binding site" evidence="1">
    <location>
        <position position="39"/>
    </location>
    <ligand>
        <name>ATP</name>
        <dbReference type="ChEBI" id="CHEBI:30616"/>
    </ligand>
</feature>
<feature type="binding site" evidence="1">
    <location>
        <begin position="65"/>
        <end position="71"/>
    </location>
    <ligand>
        <name>ATP</name>
        <dbReference type="ChEBI" id="CHEBI:30616"/>
    </ligand>
</feature>
<feature type="binding site" evidence="1">
    <location>
        <position position="92"/>
    </location>
    <ligand>
        <name>ATP</name>
        <dbReference type="ChEBI" id="CHEBI:30616"/>
    </ligand>
</feature>
<feature type="binding site" evidence="1">
    <location>
        <position position="210"/>
    </location>
    <ligand>
        <name>Mg(2+)</name>
        <dbReference type="ChEBI" id="CHEBI:18420"/>
    </ligand>
</feature>
<feature type="binding site" evidence="1">
    <location>
        <position position="213"/>
    </location>
    <ligand>
        <name>Mg(2+)</name>
        <dbReference type="ChEBI" id="CHEBI:18420"/>
    </ligand>
</feature>
<feature type="binding site" evidence="1">
    <location>
        <position position="215"/>
    </location>
    <ligand>
        <name>Mg(2+)</name>
        <dbReference type="ChEBI" id="CHEBI:18420"/>
    </ligand>
</feature>
<sequence length="302" mass="31505">MDKDKVLLVLHGKQAGNEEVRAAVAAQREAGRELAVRVTWEDGDARRIVEEALAAGYATLVAGGGDGTLREVAEALARGRGEASLAILPLGTANDFARAAGIPLEPAAALALLDQTARPIDLGEVNGKLFLNMATGGFGSKVTANTSEDLKKVLGGAAYLLTGLTRFSEVHAAQGRFSAPDFQWEGEFLALGIGNGRQAGGGHVLCPQARVDDGLLDVSILPTPQDMVGTLGTLLGGGNGVESLFVRARVPWLEVEAAEGLDVNLDGEPLEGRKLRFSVSPGALRVHLPAGSPLLREPPRED</sequence>
<proteinExistence type="inferred from homology"/>
<accession>Q9HZI3</accession>
<name>YEGS_PSEAE</name>
<organism>
    <name type="scientific">Pseudomonas aeruginosa (strain ATCC 15692 / DSM 22644 / CIP 104116 / JCM 14847 / LMG 12228 / 1C / PRS 101 / PAO1)</name>
    <dbReference type="NCBI Taxonomy" id="208964"/>
    <lineage>
        <taxon>Bacteria</taxon>
        <taxon>Pseudomonadati</taxon>
        <taxon>Pseudomonadota</taxon>
        <taxon>Gammaproteobacteria</taxon>
        <taxon>Pseudomonadales</taxon>
        <taxon>Pseudomonadaceae</taxon>
        <taxon>Pseudomonas</taxon>
    </lineage>
</organism>
<keyword id="KW-0067">ATP-binding</keyword>
<keyword id="KW-0963">Cytoplasm</keyword>
<keyword id="KW-0418">Kinase</keyword>
<keyword id="KW-0444">Lipid biosynthesis</keyword>
<keyword id="KW-0443">Lipid metabolism</keyword>
<keyword id="KW-0460">Magnesium</keyword>
<keyword id="KW-0479">Metal-binding</keyword>
<keyword id="KW-0547">Nucleotide-binding</keyword>
<keyword id="KW-0594">Phospholipid biosynthesis</keyword>
<keyword id="KW-1208">Phospholipid metabolism</keyword>
<keyword id="KW-1185">Reference proteome</keyword>
<keyword id="KW-0808">Transferase</keyword>
<protein>
    <recommendedName>
        <fullName evidence="1">Probable lipid kinase YegS-like</fullName>
        <ecNumber evidence="1">2.7.1.-</ecNumber>
    </recommendedName>
</protein>
<dbReference type="EC" id="2.7.1.-" evidence="1"/>
<dbReference type="EMBL" id="AE004091">
    <property type="protein sequence ID" value="AAG06411.1"/>
    <property type="molecule type" value="Genomic_DNA"/>
</dbReference>
<dbReference type="PIR" id="D83268">
    <property type="entry name" value="D83268"/>
</dbReference>
<dbReference type="RefSeq" id="NP_251713.1">
    <property type="nucleotide sequence ID" value="NC_002516.2"/>
</dbReference>
<dbReference type="SMR" id="Q9HZI3"/>
<dbReference type="FunCoup" id="Q9HZI3">
    <property type="interactions" value="480"/>
</dbReference>
<dbReference type="STRING" id="208964.PA3023"/>
<dbReference type="PaxDb" id="208964-PA3023"/>
<dbReference type="GeneID" id="882986"/>
<dbReference type="KEGG" id="pae:PA3023"/>
<dbReference type="PATRIC" id="fig|208964.12.peg.3172"/>
<dbReference type="PseudoCAP" id="PA3023"/>
<dbReference type="HOGENOM" id="CLU_045532_1_1_6"/>
<dbReference type="InParanoid" id="Q9HZI3"/>
<dbReference type="OrthoDB" id="142078at2"/>
<dbReference type="PhylomeDB" id="Q9HZI3"/>
<dbReference type="BioCyc" id="PAER208964:G1FZ6-3075-MONOMER"/>
<dbReference type="Proteomes" id="UP000002438">
    <property type="component" value="Chromosome"/>
</dbReference>
<dbReference type="GO" id="GO:0005737">
    <property type="term" value="C:cytoplasm"/>
    <property type="evidence" value="ECO:0007669"/>
    <property type="project" value="UniProtKB-SubCell"/>
</dbReference>
<dbReference type="GO" id="GO:0005524">
    <property type="term" value="F:ATP binding"/>
    <property type="evidence" value="ECO:0007669"/>
    <property type="project" value="UniProtKB-UniRule"/>
</dbReference>
<dbReference type="GO" id="GO:0001727">
    <property type="term" value="F:lipid kinase activity"/>
    <property type="evidence" value="ECO:0007669"/>
    <property type="project" value="UniProtKB-UniRule"/>
</dbReference>
<dbReference type="GO" id="GO:0000287">
    <property type="term" value="F:magnesium ion binding"/>
    <property type="evidence" value="ECO:0007669"/>
    <property type="project" value="UniProtKB-UniRule"/>
</dbReference>
<dbReference type="GO" id="GO:0008654">
    <property type="term" value="P:phospholipid biosynthetic process"/>
    <property type="evidence" value="ECO:0007669"/>
    <property type="project" value="UniProtKB-UniRule"/>
</dbReference>
<dbReference type="Gene3D" id="2.60.200.40">
    <property type="match status" value="1"/>
</dbReference>
<dbReference type="Gene3D" id="3.40.50.10330">
    <property type="entry name" value="Probable inorganic polyphosphate/atp-NAD kinase, domain 1"/>
    <property type="match status" value="1"/>
</dbReference>
<dbReference type="HAMAP" id="MF_01377">
    <property type="entry name" value="YegS"/>
    <property type="match status" value="1"/>
</dbReference>
<dbReference type="InterPro" id="IPR017438">
    <property type="entry name" value="ATP-NAD_kinase_N"/>
</dbReference>
<dbReference type="InterPro" id="IPR005218">
    <property type="entry name" value="Diacylglycerol/lipid_kinase"/>
</dbReference>
<dbReference type="InterPro" id="IPR001206">
    <property type="entry name" value="Diacylglycerol_kinase_cat_dom"/>
</dbReference>
<dbReference type="InterPro" id="IPR022433">
    <property type="entry name" value="Lip_kinase_YegS"/>
</dbReference>
<dbReference type="InterPro" id="IPR050187">
    <property type="entry name" value="Lipid_Phosphate_FormReg"/>
</dbReference>
<dbReference type="InterPro" id="IPR016064">
    <property type="entry name" value="NAD/diacylglycerol_kinase_sf"/>
</dbReference>
<dbReference type="InterPro" id="IPR045540">
    <property type="entry name" value="YegS/DAGK_C"/>
</dbReference>
<dbReference type="NCBIfam" id="TIGR03702">
    <property type="entry name" value="lip_kinase_YegS"/>
    <property type="match status" value="1"/>
</dbReference>
<dbReference type="NCBIfam" id="NF009602">
    <property type="entry name" value="PRK13054.1"/>
    <property type="match status" value="1"/>
</dbReference>
<dbReference type="NCBIfam" id="TIGR00147">
    <property type="entry name" value="YegS/Rv2252/BmrU family lipid kinase"/>
    <property type="match status" value="1"/>
</dbReference>
<dbReference type="PANTHER" id="PTHR12358:SF106">
    <property type="entry name" value="LIPID KINASE YEGS"/>
    <property type="match status" value="1"/>
</dbReference>
<dbReference type="PANTHER" id="PTHR12358">
    <property type="entry name" value="SPHINGOSINE KINASE"/>
    <property type="match status" value="1"/>
</dbReference>
<dbReference type="Pfam" id="PF00781">
    <property type="entry name" value="DAGK_cat"/>
    <property type="match status" value="1"/>
</dbReference>
<dbReference type="Pfam" id="PF19279">
    <property type="entry name" value="YegS_C"/>
    <property type="match status" value="1"/>
</dbReference>
<dbReference type="SMART" id="SM00046">
    <property type="entry name" value="DAGKc"/>
    <property type="match status" value="1"/>
</dbReference>
<dbReference type="SUPFAM" id="SSF111331">
    <property type="entry name" value="NAD kinase/diacylglycerol kinase-like"/>
    <property type="match status" value="1"/>
</dbReference>
<dbReference type="PROSITE" id="PS50146">
    <property type="entry name" value="DAGK"/>
    <property type="match status" value="1"/>
</dbReference>
<comment type="function">
    <text evidence="1">Probably phosphorylates lipids; the in vivo substrate is unknown.</text>
</comment>
<comment type="cofactor">
    <cofactor evidence="1">
        <name>Mg(2+)</name>
        <dbReference type="ChEBI" id="CHEBI:18420"/>
    </cofactor>
    <cofactor evidence="1">
        <name>Ca(2+)</name>
        <dbReference type="ChEBI" id="CHEBI:29108"/>
    </cofactor>
    <text evidence="1">Binds 1 Mg(2+) ion per subunit. Ca(2+) may be able to substitute.</text>
</comment>
<comment type="subcellular location">
    <subcellularLocation>
        <location evidence="1">Cytoplasm</location>
    </subcellularLocation>
</comment>
<comment type="similarity">
    <text evidence="1">Belongs to the diacylglycerol/lipid kinase family. YegS lipid kinase subfamily.</text>
</comment>
<evidence type="ECO:0000255" key="1">
    <source>
        <dbReference type="HAMAP-Rule" id="MF_01377"/>
    </source>
</evidence>
<reference key="1">
    <citation type="journal article" date="2000" name="Nature">
        <title>Complete genome sequence of Pseudomonas aeruginosa PAO1, an opportunistic pathogen.</title>
        <authorList>
            <person name="Stover C.K."/>
            <person name="Pham X.-Q.T."/>
            <person name="Erwin A.L."/>
            <person name="Mizoguchi S.D."/>
            <person name="Warrener P."/>
            <person name="Hickey M.J."/>
            <person name="Brinkman F.S.L."/>
            <person name="Hufnagle W.O."/>
            <person name="Kowalik D.J."/>
            <person name="Lagrou M."/>
            <person name="Garber R.L."/>
            <person name="Goltry L."/>
            <person name="Tolentino E."/>
            <person name="Westbrock-Wadman S."/>
            <person name="Yuan Y."/>
            <person name="Brody L.L."/>
            <person name="Coulter S.N."/>
            <person name="Folger K.R."/>
            <person name="Kas A."/>
            <person name="Larbig K."/>
            <person name="Lim R.M."/>
            <person name="Smith K.A."/>
            <person name="Spencer D.H."/>
            <person name="Wong G.K.-S."/>
            <person name="Wu Z."/>
            <person name="Paulsen I.T."/>
            <person name="Reizer J."/>
            <person name="Saier M.H. Jr."/>
            <person name="Hancock R.E.W."/>
            <person name="Lory S."/>
            <person name="Olson M.V."/>
        </authorList>
    </citation>
    <scope>NUCLEOTIDE SEQUENCE [LARGE SCALE GENOMIC DNA]</scope>
    <source>
        <strain>ATCC 15692 / DSM 22644 / CIP 104116 / JCM 14847 / LMG 12228 / 1C / PRS 101 / PAO1</strain>
    </source>
</reference>
<gene>
    <name type="ordered locus">PA3023</name>
</gene>